<sequence>MELNQPPLPTEIDDDAYHKPSFNDLGLKESVLKSVYEAGFTSPSPIQEKAIPAVLQGRDVIAQAQTGTGKTAAFALPIINNLKNNHTIEALVITPTRELAMQISDEIFKLGKHTRTKTVCVYGGQSVKKQCEFIKKNPQVMIATPGRLLDHLKNERIHKFVPKVVVLDESDEMLDMGFLDDIEEIFDYLPSEAQILLFSATMPEPIKRLADKILENPIKIHIAPSNITNTDITQRFYVINEHERAEAIMRLLDTQAPKKSIVFTRTKKEADELHQFLASKNYKSTALHGDMDQRDRRASIMAFKKNDADVLVATDVASRGLDISGVSHVFNYHLPLNTESYIHRIGRTGRAGKKGMAITLVTPLEYKELLRMQKEIDSEIELFEIPTINENQIIKTLHDAKVSEGIISLYEQLTEIFEPSQLVLKLLSLQFETSKIGLNQQEIDAIQNPKEKTPKPSHKKTPQHERARSFKKGQHRDRHPKTNHHSKKPKRR</sequence>
<name>RHPA_HELP8</name>
<reference key="1">
    <citation type="journal article" date="2009" name="BMC Genomics">
        <title>Genome sequence analysis of Helicobacter pylori strains associated with gastric ulceration and gastric cancer.</title>
        <authorList>
            <person name="McClain M.S."/>
            <person name="Shaffer C.L."/>
            <person name="Israel D.A."/>
            <person name="Peek R.M. Jr."/>
            <person name="Cover T.L."/>
        </authorList>
    </citation>
    <scope>NUCLEOTIDE SEQUENCE [LARGE SCALE GENOMIC DNA]</scope>
    <source>
        <strain>B128</strain>
    </source>
</reference>
<reference key="2">
    <citation type="journal article" date="2013" name="Nucleic Acids Res.">
        <title>A minimal bacterial RNase J-based degradosome is associated with translating ribosomes.</title>
        <authorList>
            <person name="Redko Y."/>
            <person name="Aubert S."/>
            <person name="Stachowicz A."/>
            <person name="Lenormand P."/>
            <person name="Namane A."/>
            <person name="Darfeuille F."/>
            <person name="Thibonnier M."/>
            <person name="De Reuse H."/>
        </authorList>
    </citation>
    <scope>FUNCTION AS AN ATPASE</scope>
    <scope>INTERACTION WITH RNJ</scope>
    <scope>SUBUNIT</scope>
    <scope>SUBCELLULAR LOCATION</scope>
    <scope>DISRUPTION PHENOTYPE</scope>
    <source>
        <strain>B128</strain>
    </source>
</reference>
<accession>B9XXL6</accession>
<keyword id="KW-0067">ATP-binding</keyword>
<keyword id="KW-0963">Cytoplasm</keyword>
<keyword id="KW-0347">Helicase</keyword>
<keyword id="KW-0378">Hydrolase</keyword>
<keyword id="KW-0547">Nucleotide-binding</keyword>
<keyword id="KW-0694">RNA-binding</keyword>
<dbReference type="EC" id="3.6.4.13"/>
<dbReference type="EMBL" id="ABSY01000001">
    <property type="protein sequence ID" value="EEC25260.1"/>
    <property type="molecule type" value="Genomic_DNA"/>
</dbReference>
<dbReference type="RefSeq" id="WP_000422528.1">
    <property type="nucleotide sequence ID" value="NZ_CP024951.1"/>
</dbReference>
<dbReference type="SMR" id="B9XXL6"/>
<dbReference type="PHI-base" id="PHI:8011"/>
<dbReference type="GO" id="GO:0005829">
    <property type="term" value="C:cytosol"/>
    <property type="evidence" value="ECO:0007669"/>
    <property type="project" value="TreeGrafter"/>
</dbReference>
<dbReference type="GO" id="GO:0005524">
    <property type="term" value="F:ATP binding"/>
    <property type="evidence" value="ECO:0007669"/>
    <property type="project" value="UniProtKB-KW"/>
</dbReference>
<dbReference type="GO" id="GO:0016887">
    <property type="term" value="F:ATP hydrolysis activity"/>
    <property type="evidence" value="ECO:0007669"/>
    <property type="project" value="RHEA"/>
</dbReference>
<dbReference type="GO" id="GO:0003723">
    <property type="term" value="F:RNA binding"/>
    <property type="evidence" value="ECO:0007669"/>
    <property type="project" value="UniProtKB-KW"/>
</dbReference>
<dbReference type="GO" id="GO:0003724">
    <property type="term" value="F:RNA helicase activity"/>
    <property type="evidence" value="ECO:0007669"/>
    <property type="project" value="UniProtKB-EC"/>
</dbReference>
<dbReference type="CDD" id="cd00268">
    <property type="entry name" value="DEADc"/>
    <property type="match status" value="1"/>
</dbReference>
<dbReference type="CDD" id="cd18787">
    <property type="entry name" value="SF2_C_DEAD"/>
    <property type="match status" value="1"/>
</dbReference>
<dbReference type="FunFam" id="3.40.50.300:FF:000108">
    <property type="entry name" value="ATP-dependent RNA helicase RhlE"/>
    <property type="match status" value="1"/>
</dbReference>
<dbReference type="Gene3D" id="3.40.50.300">
    <property type="entry name" value="P-loop containing nucleotide triphosphate hydrolases"/>
    <property type="match status" value="2"/>
</dbReference>
<dbReference type="InterPro" id="IPR011545">
    <property type="entry name" value="DEAD/DEAH_box_helicase_dom"/>
</dbReference>
<dbReference type="InterPro" id="IPR050079">
    <property type="entry name" value="DEAD_box_RNA_helicase"/>
</dbReference>
<dbReference type="InterPro" id="IPR014001">
    <property type="entry name" value="Helicase_ATP-bd"/>
</dbReference>
<dbReference type="InterPro" id="IPR001650">
    <property type="entry name" value="Helicase_C-like"/>
</dbReference>
<dbReference type="InterPro" id="IPR027417">
    <property type="entry name" value="P-loop_NTPase"/>
</dbReference>
<dbReference type="InterPro" id="IPR014014">
    <property type="entry name" value="RNA_helicase_DEAD_Q_motif"/>
</dbReference>
<dbReference type="PANTHER" id="PTHR47959:SF1">
    <property type="entry name" value="ATP-DEPENDENT RNA HELICASE DBPA"/>
    <property type="match status" value="1"/>
</dbReference>
<dbReference type="PANTHER" id="PTHR47959">
    <property type="entry name" value="ATP-DEPENDENT RNA HELICASE RHLE-RELATED"/>
    <property type="match status" value="1"/>
</dbReference>
<dbReference type="Pfam" id="PF00270">
    <property type="entry name" value="DEAD"/>
    <property type="match status" value="1"/>
</dbReference>
<dbReference type="Pfam" id="PF00271">
    <property type="entry name" value="Helicase_C"/>
    <property type="match status" value="1"/>
</dbReference>
<dbReference type="SMART" id="SM00487">
    <property type="entry name" value="DEXDc"/>
    <property type="match status" value="1"/>
</dbReference>
<dbReference type="SMART" id="SM00490">
    <property type="entry name" value="HELICc"/>
    <property type="match status" value="1"/>
</dbReference>
<dbReference type="SUPFAM" id="SSF52540">
    <property type="entry name" value="P-loop containing nucleoside triphosphate hydrolases"/>
    <property type="match status" value="1"/>
</dbReference>
<dbReference type="PROSITE" id="PS51192">
    <property type="entry name" value="HELICASE_ATP_BIND_1"/>
    <property type="match status" value="1"/>
</dbReference>
<dbReference type="PROSITE" id="PS51194">
    <property type="entry name" value="HELICASE_CTER"/>
    <property type="match status" value="1"/>
</dbReference>
<dbReference type="PROSITE" id="PS51195">
    <property type="entry name" value="Q_MOTIF"/>
    <property type="match status" value="1"/>
</dbReference>
<organism>
    <name type="scientific">Helicobacter pylori (strain B128)</name>
    <dbReference type="NCBI Taxonomy" id="544406"/>
    <lineage>
        <taxon>Bacteria</taxon>
        <taxon>Pseudomonadati</taxon>
        <taxon>Campylobacterota</taxon>
        <taxon>Epsilonproteobacteria</taxon>
        <taxon>Campylobacterales</taxon>
        <taxon>Helicobacteraceae</taxon>
        <taxon>Helicobacter</taxon>
    </lineage>
</organism>
<comment type="function">
    <text evidence="1 5">DEAD-box RNA helicase probably involved in RNA degradation. Unwinds dsRNA in both 5'- and 3'-directions (By similarity). Background RNA-dependent ATPase activity is stimulated about 5-fold by RNaseJ (rnj). Stimulates the dsRNase activity of RNase J.</text>
</comment>
<comment type="catalytic activity">
    <reaction>
        <text>ATP + H2O = ADP + phosphate + H(+)</text>
        <dbReference type="Rhea" id="RHEA:13065"/>
        <dbReference type="ChEBI" id="CHEBI:15377"/>
        <dbReference type="ChEBI" id="CHEBI:15378"/>
        <dbReference type="ChEBI" id="CHEBI:30616"/>
        <dbReference type="ChEBI" id="CHEBI:43474"/>
        <dbReference type="ChEBI" id="CHEBI:456216"/>
        <dbReference type="EC" id="3.6.4.13"/>
    </reaction>
</comment>
<comment type="subunit">
    <text evidence="1 5">Homodimer (By similarity). Interacts with RNase J (rnj), might be a member of a minimal RNA degradosome complex.</text>
</comment>
<comment type="subcellular location">
    <subcellularLocation>
        <location evidence="5">Cytoplasm</location>
    </subcellularLocation>
    <text>The RNaseJ-RhpA complex co-localizes with 70S ribosomes and polysomes; remains associated with ribosomes in the absence of RNase J.</text>
</comment>
<comment type="disruption phenotype">
    <text evidence="5">Not essential, it can be deleted. RNase J remains associated with the ribosomes and polysomes.</text>
</comment>
<comment type="similarity">
    <text evidence="6">Belongs to the DEAD box helicase family.</text>
</comment>
<protein>
    <recommendedName>
        <fullName>DEAD-box ATP-dependent RNA helicase RhpA</fullName>
        <ecNumber>3.6.4.13</ecNumber>
    </recommendedName>
</protein>
<feature type="chain" id="PRO_0000430106" description="DEAD-box ATP-dependent RNA helicase RhpA">
    <location>
        <begin position="1"/>
        <end position="492"/>
    </location>
</feature>
<feature type="domain" description="Helicase ATP-binding" evidence="2">
    <location>
        <begin position="51"/>
        <end position="220"/>
    </location>
</feature>
<feature type="domain" description="Helicase C-terminal" evidence="3">
    <location>
        <begin position="231"/>
        <end position="393"/>
    </location>
</feature>
<feature type="region of interest" description="Disordered" evidence="4">
    <location>
        <begin position="445"/>
        <end position="492"/>
    </location>
</feature>
<feature type="short sequence motif" description="Q motif">
    <location>
        <begin position="20"/>
        <end position="48"/>
    </location>
</feature>
<feature type="short sequence motif" description="DEAD box">
    <location>
        <begin position="168"/>
        <end position="171"/>
    </location>
</feature>
<feature type="compositionally biased region" description="Basic residues" evidence="4">
    <location>
        <begin position="469"/>
        <end position="492"/>
    </location>
</feature>
<feature type="binding site" evidence="2">
    <location>
        <begin position="64"/>
        <end position="71"/>
    </location>
    <ligand>
        <name>ATP</name>
        <dbReference type="ChEBI" id="CHEBI:30616"/>
    </ligand>
</feature>
<evidence type="ECO:0000250" key="1"/>
<evidence type="ECO:0000255" key="2">
    <source>
        <dbReference type="PROSITE-ProRule" id="PRU00541"/>
    </source>
</evidence>
<evidence type="ECO:0000255" key="3">
    <source>
        <dbReference type="PROSITE-ProRule" id="PRU00542"/>
    </source>
</evidence>
<evidence type="ECO:0000256" key="4">
    <source>
        <dbReference type="SAM" id="MobiDB-lite"/>
    </source>
</evidence>
<evidence type="ECO:0000269" key="5">
    <source>
    </source>
</evidence>
<evidence type="ECO:0000305" key="6"/>
<gene>
    <name type="primary">rhpA</name>
    <name type="ORF">HPB128_21g22</name>
</gene>
<proteinExistence type="evidence at protein level"/>